<evidence type="ECO:0000255" key="1">
    <source>
        <dbReference type="HAMAP-Rule" id="MF_00482"/>
    </source>
</evidence>
<feature type="chain" id="PRO_0000088625" description="Photosystem I P700 chlorophyll a apoprotein A2">
    <location>
        <begin position="1"/>
        <end position="733"/>
    </location>
</feature>
<feature type="transmembrane region" description="Helical; Name=I" evidence="1">
    <location>
        <begin position="46"/>
        <end position="69"/>
    </location>
</feature>
<feature type="transmembrane region" description="Helical; Name=II" evidence="1">
    <location>
        <begin position="134"/>
        <end position="157"/>
    </location>
</feature>
<feature type="transmembrane region" description="Helical; Name=III" evidence="1">
    <location>
        <begin position="174"/>
        <end position="198"/>
    </location>
</feature>
<feature type="transmembrane region" description="Helical; Name=IV" evidence="1">
    <location>
        <begin position="272"/>
        <end position="290"/>
    </location>
</feature>
<feature type="transmembrane region" description="Helical; Name=V" evidence="1">
    <location>
        <begin position="329"/>
        <end position="352"/>
    </location>
</feature>
<feature type="transmembrane region" description="Helical; Name=VI" evidence="1">
    <location>
        <begin position="368"/>
        <end position="394"/>
    </location>
</feature>
<feature type="transmembrane region" description="Helical; Name=VII" evidence="1">
    <location>
        <begin position="416"/>
        <end position="438"/>
    </location>
</feature>
<feature type="transmembrane region" description="Helical; Name=VIII" evidence="1">
    <location>
        <begin position="516"/>
        <end position="534"/>
    </location>
</feature>
<feature type="transmembrane region" description="Helical; Name=IX" evidence="1">
    <location>
        <begin position="574"/>
        <end position="595"/>
    </location>
</feature>
<feature type="transmembrane region" description="Helical; Name=X" evidence="1">
    <location>
        <begin position="642"/>
        <end position="664"/>
    </location>
</feature>
<feature type="transmembrane region" description="Helical; Name=XI" evidence="1">
    <location>
        <begin position="706"/>
        <end position="726"/>
    </location>
</feature>
<feature type="binding site" evidence="1">
    <location>
        <position position="558"/>
    </location>
    <ligand>
        <name>[4Fe-4S] cluster</name>
        <dbReference type="ChEBI" id="CHEBI:49883"/>
        <note>ligand shared between dimeric partners</note>
    </ligand>
</feature>
<feature type="binding site" evidence="1">
    <location>
        <position position="567"/>
    </location>
    <ligand>
        <name>[4Fe-4S] cluster</name>
        <dbReference type="ChEBI" id="CHEBI:49883"/>
        <note>ligand shared between dimeric partners</note>
    </ligand>
</feature>
<feature type="binding site" description="axial binding residue" evidence="1">
    <location>
        <position position="653"/>
    </location>
    <ligand>
        <name>chlorophyll a</name>
        <dbReference type="ChEBI" id="CHEBI:58416"/>
        <label>B1</label>
    </ligand>
    <ligandPart>
        <name>Mg</name>
        <dbReference type="ChEBI" id="CHEBI:25107"/>
    </ligandPart>
</feature>
<feature type="binding site" description="axial binding residue" evidence="1">
    <location>
        <position position="661"/>
    </location>
    <ligand>
        <name>chlorophyll a</name>
        <dbReference type="ChEBI" id="CHEBI:58416"/>
        <label>B3</label>
    </ligand>
    <ligandPart>
        <name>Mg</name>
        <dbReference type="ChEBI" id="CHEBI:25107"/>
    </ligandPart>
</feature>
<feature type="binding site" evidence="1">
    <location>
        <position position="669"/>
    </location>
    <ligand>
        <name>chlorophyll a</name>
        <dbReference type="ChEBI" id="CHEBI:58416"/>
        <label>B3</label>
    </ligand>
</feature>
<feature type="binding site" evidence="1">
    <location>
        <position position="670"/>
    </location>
    <ligand>
        <name>phylloquinone</name>
        <dbReference type="ChEBI" id="CHEBI:18067"/>
        <label>B</label>
    </ligand>
</feature>
<geneLocation type="chloroplast"/>
<proteinExistence type="inferred from homology"/>
<protein>
    <recommendedName>
        <fullName evidence="1">Photosystem I P700 chlorophyll a apoprotein A2</fullName>
        <ecNumber evidence="1">1.97.1.12</ecNumber>
    </recommendedName>
    <alternativeName>
        <fullName evidence="1">PSI-B</fullName>
    </alternativeName>
    <alternativeName>
        <fullName evidence="1">PsaB</fullName>
    </alternativeName>
</protein>
<gene>
    <name evidence="1" type="primary">psaB</name>
</gene>
<comment type="function">
    <text evidence="1">PsaA and PsaB bind P700, the primary electron donor of photosystem I (PSI), as well as the electron acceptors A0, A1 and FX. PSI is a plastocyanin/cytochrome c6-ferredoxin oxidoreductase, converting photonic excitation into a charge separation, which transfers an electron from the donor P700 chlorophyll pair to the spectroscopically characterized acceptors A0, A1, FX, FA and FB in turn. Oxidized P700 is reduced on the lumenal side of the thylakoid membrane by plastocyanin or cytochrome c6.</text>
</comment>
<comment type="catalytic activity">
    <reaction evidence="1">
        <text>reduced [plastocyanin] + hnu + oxidized [2Fe-2S]-[ferredoxin] = oxidized [plastocyanin] + reduced [2Fe-2S]-[ferredoxin]</text>
        <dbReference type="Rhea" id="RHEA:30407"/>
        <dbReference type="Rhea" id="RHEA-COMP:10000"/>
        <dbReference type="Rhea" id="RHEA-COMP:10001"/>
        <dbReference type="Rhea" id="RHEA-COMP:10039"/>
        <dbReference type="Rhea" id="RHEA-COMP:10040"/>
        <dbReference type="ChEBI" id="CHEBI:29036"/>
        <dbReference type="ChEBI" id="CHEBI:30212"/>
        <dbReference type="ChEBI" id="CHEBI:33737"/>
        <dbReference type="ChEBI" id="CHEBI:33738"/>
        <dbReference type="ChEBI" id="CHEBI:49552"/>
        <dbReference type="EC" id="1.97.1.12"/>
    </reaction>
</comment>
<comment type="cofactor">
    <text evidence="1">P700 is a chlorophyll a/chlorophyll a' dimer, A0 is one or more chlorophyll a, A1 is one or both phylloquinones and FX is a shared 4Fe-4S iron-sulfur center.</text>
</comment>
<comment type="subunit">
    <text evidence="1">The PsaA/B heterodimer binds the P700 chlorophyll special pair and subsequent electron acceptors. PSI consists of a core antenna complex that captures photons, and an electron transfer chain that converts photonic excitation into a charge separation. The eukaryotic PSI reaction center is composed of at least 11 subunits.</text>
</comment>
<comment type="subcellular location">
    <subcellularLocation>
        <location evidence="1">Plastid</location>
        <location evidence="1">Chloroplast thylakoid membrane</location>
        <topology evidence="1">Multi-pass membrane protein</topology>
    </subcellularLocation>
</comment>
<comment type="similarity">
    <text evidence="1">Belongs to the PsaA/PsaB family.</text>
</comment>
<dbReference type="EC" id="1.97.1.12" evidence="1"/>
<dbReference type="EMBL" id="Z67753">
    <property type="protein sequence ID" value="CAA91749.1"/>
    <property type="molecule type" value="Genomic_DNA"/>
</dbReference>
<dbReference type="PIR" id="S78376">
    <property type="entry name" value="S78376"/>
</dbReference>
<dbReference type="RefSeq" id="NP_043717.1">
    <property type="nucleotide sequence ID" value="NC_001713.1"/>
</dbReference>
<dbReference type="SMR" id="P49480"/>
<dbReference type="GeneID" id="801830"/>
<dbReference type="GO" id="GO:0009535">
    <property type="term" value="C:chloroplast thylakoid membrane"/>
    <property type="evidence" value="ECO:0007669"/>
    <property type="project" value="UniProtKB-SubCell"/>
</dbReference>
<dbReference type="GO" id="GO:0009522">
    <property type="term" value="C:photosystem I"/>
    <property type="evidence" value="ECO:0007669"/>
    <property type="project" value="UniProtKB-KW"/>
</dbReference>
<dbReference type="GO" id="GO:0051539">
    <property type="term" value="F:4 iron, 4 sulfur cluster binding"/>
    <property type="evidence" value="ECO:0007669"/>
    <property type="project" value="UniProtKB-KW"/>
</dbReference>
<dbReference type="GO" id="GO:0016168">
    <property type="term" value="F:chlorophyll binding"/>
    <property type="evidence" value="ECO:0007669"/>
    <property type="project" value="UniProtKB-KW"/>
</dbReference>
<dbReference type="GO" id="GO:0009055">
    <property type="term" value="F:electron transfer activity"/>
    <property type="evidence" value="ECO:0007669"/>
    <property type="project" value="UniProtKB-UniRule"/>
</dbReference>
<dbReference type="GO" id="GO:0000287">
    <property type="term" value="F:magnesium ion binding"/>
    <property type="evidence" value="ECO:0007669"/>
    <property type="project" value="UniProtKB-UniRule"/>
</dbReference>
<dbReference type="GO" id="GO:0016491">
    <property type="term" value="F:oxidoreductase activity"/>
    <property type="evidence" value="ECO:0007669"/>
    <property type="project" value="UniProtKB-KW"/>
</dbReference>
<dbReference type="GO" id="GO:0015979">
    <property type="term" value="P:photosynthesis"/>
    <property type="evidence" value="ECO:0007669"/>
    <property type="project" value="UniProtKB-UniRule"/>
</dbReference>
<dbReference type="FunFam" id="1.20.1130.10:FF:000001">
    <property type="entry name" value="Photosystem I P700 chlorophyll a apoprotein A2"/>
    <property type="match status" value="1"/>
</dbReference>
<dbReference type="Gene3D" id="1.20.1130.10">
    <property type="entry name" value="Photosystem I PsaA/PsaB"/>
    <property type="match status" value="1"/>
</dbReference>
<dbReference type="HAMAP" id="MF_00482">
    <property type="entry name" value="PSI_PsaB"/>
    <property type="match status" value="1"/>
</dbReference>
<dbReference type="InterPro" id="IPR001280">
    <property type="entry name" value="PSI_PsaA/B"/>
</dbReference>
<dbReference type="InterPro" id="IPR020586">
    <property type="entry name" value="PSI_PsaA/B_CS"/>
</dbReference>
<dbReference type="InterPro" id="IPR036408">
    <property type="entry name" value="PSI_PsaA/B_sf"/>
</dbReference>
<dbReference type="InterPro" id="IPR006244">
    <property type="entry name" value="PSI_PsaB"/>
</dbReference>
<dbReference type="NCBIfam" id="TIGR01336">
    <property type="entry name" value="psaB"/>
    <property type="match status" value="1"/>
</dbReference>
<dbReference type="PANTHER" id="PTHR30128">
    <property type="entry name" value="OUTER MEMBRANE PROTEIN, OMPA-RELATED"/>
    <property type="match status" value="1"/>
</dbReference>
<dbReference type="PANTHER" id="PTHR30128:SF19">
    <property type="entry name" value="PHOTOSYSTEM I P700 CHLOROPHYLL A APOPROTEIN A1-RELATED"/>
    <property type="match status" value="1"/>
</dbReference>
<dbReference type="Pfam" id="PF00223">
    <property type="entry name" value="PsaA_PsaB"/>
    <property type="match status" value="1"/>
</dbReference>
<dbReference type="PIRSF" id="PIRSF002905">
    <property type="entry name" value="PSI_A"/>
    <property type="match status" value="1"/>
</dbReference>
<dbReference type="PRINTS" id="PR00257">
    <property type="entry name" value="PHOTSYSPSAAB"/>
</dbReference>
<dbReference type="SUPFAM" id="SSF81558">
    <property type="entry name" value="Photosystem I subunits PsaA/PsaB"/>
    <property type="match status" value="1"/>
</dbReference>
<dbReference type="PROSITE" id="PS00419">
    <property type="entry name" value="PHOTOSYSTEM_I_PSAAB"/>
    <property type="match status" value="1"/>
</dbReference>
<accession>P49480</accession>
<organism>
    <name type="scientific">Trieres chinensis</name>
    <name type="common">Marine centric diatom</name>
    <name type="synonym">Odontella sinensis</name>
    <dbReference type="NCBI Taxonomy" id="1514140"/>
    <lineage>
        <taxon>Eukaryota</taxon>
        <taxon>Sar</taxon>
        <taxon>Stramenopiles</taxon>
        <taxon>Ochrophyta</taxon>
        <taxon>Bacillariophyta</taxon>
        <taxon>Mediophyceae</taxon>
        <taxon>Biddulphiophycidae</taxon>
        <taxon>Eupodiscales</taxon>
        <taxon>Parodontellaceae</taxon>
        <taxon>Trieres</taxon>
    </lineage>
</organism>
<keyword id="KW-0004">4Fe-4S</keyword>
<keyword id="KW-0148">Chlorophyll</keyword>
<keyword id="KW-0150">Chloroplast</keyword>
<keyword id="KW-0157">Chromophore</keyword>
<keyword id="KW-0249">Electron transport</keyword>
<keyword id="KW-0408">Iron</keyword>
<keyword id="KW-0411">Iron-sulfur</keyword>
<keyword id="KW-0460">Magnesium</keyword>
<keyword id="KW-0472">Membrane</keyword>
<keyword id="KW-0479">Metal-binding</keyword>
<keyword id="KW-0560">Oxidoreductase</keyword>
<keyword id="KW-0602">Photosynthesis</keyword>
<keyword id="KW-0603">Photosystem I</keyword>
<keyword id="KW-0934">Plastid</keyword>
<keyword id="KW-0793">Thylakoid</keyword>
<keyword id="KW-0812">Transmembrane</keyword>
<keyword id="KW-1133">Transmembrane helix</keyword>
<keyword id="KW-0813">Transport</keyword>
<sequence>MATKFPKFSQALAQDPATRRIWYGIATAHDLEAHDGMTEENLYQKIFASHFGHLAVIFLWTAGNLFHVAWQGNFEQWVAKPLKVRPIAHSIWDPHFGESALKAFSKGNTYPVNIAFSGVYQWWYTIGFRTNQELYLGSVGLLLLSCALLFAGWLHLQPKFRPSLSWFKNNESRLNHHLSGLMGVSSLAWTGHLVHVALPASRGVHVGWDNFLTTPPHPAGLTPFFTGNWTVYAQNPDSPSHVYGTSEGAGTRILTFLGGFHPQTQSLWLSDIAHHQLAIAFVFIIAGHMYRTNFGIGHNMKEILDAHRPPGGRLGAGHVGLFETITNSLHIQLGLALACLGVATSLTAQHMYALTPYAYLSKDFTTEAALYTHHQYIAGFLMVGAFAHGAIFFVRDYDPELNKNNVLARMLEHKEAIISHLSWASLFLGFHVLGLYIHNDTVVAFGQPEKQILFEPLFAEYIQAASGKAVYNFNVLLSSSTNPATIAGNQVWLPGWLEAINNSKTDLFLKIGPGDFLVHHAIALGLHVTTLILVKGALDARGSKLMPDKKDFGYSFPCDGPGRGGTCDISAWDAFYLAMFWMLNTIGWVTFYWHWKHMTIWGGNPGQFDESSNYIMGWLRDYLWLNSSPLINGYNPFGMNNLSVWAWMFLFGHLIWATGFMFLISWRGYWQELIETLVWAHERTPLANLIRWRDKPVALSIVQARLVGLVHFAVGYILTYAAFVIASTSGKFA</sequence>
<name>PSAB_TRICV</name>
<reference key="1">
    <citation type="journal article" date="1995" name="Plant Mol. Biol. Rep.">
        <title>The chloroplast genome of a chlorophyll a+c-containing alga, Odontella sinensis.</title>
        <authorList>
            <person name="Kowallik K.V."/>
            <person name="Stoebe B."/>
            <person name="Schaffran I."/>
            <person name="Kroth-Pancic P."/>
            <person name="Freier U."/>
        </authorList>
    </citation>
    <scope>NUCLEOTIDE SEQUENCE [LARGE SCALE GENOMIC DNA]</scope>
</reference>